<organism>
    <name type="scientific">Geotalea daltonii (strain DSM 22248 / JCM 15807 / FRC-32)</name>
    <name type="common">Geobacter daltonii</name>
    <dbReference type="NCBI Taxonomy" id="316067"/>
    <lineage>
        <taxon>Bacteria</taxon>
        <taxon>Pseudomonadati</taxon>
        <taxon>Thermodesulfobacteriota</taxon>
        <taxon>Desulfuromonadia</taxon>
        <taxon>Geobacterales</taxon>
        <taxon>Geobacteraceae</taxon>
        <taxon>Geotalea</taxon>
    </lineage>
</organism>
<protein>
    <recommendedName>
        <fullName evidence="1">5'-nucleotidase SurE</fullName>
        <ecNumber evidence="1">3.1.3.5</ecNumber>
    </recommendedName>
    <alternativeName>
        <fullName evidence="1">Nucleoside 5'-monophosphate phosphohydrolase</fullName>
    </alternativeName>
</protein>
<proteinExistence type="inferred from homology"/>
<dbReference type="EC" id="3.1.3.5" evidence="1"/>
<dbReference type="EMBL" id="CP001390">
    <property type="protein sequence ID" value="ACM21678.1"/>
    <property type="molecule type" value="Genomic_DNA"/>
</dbReference>
<dbReference type="RefSeq" id="WP_012648406.1">
    <property type="nucleotide sequence ID" value="NC_011979.1"/>
</dbReference>
<dbReference type="SMR" id="B9M4Z4"/>
<dbReference type="STRING" id="316067.Geob_3335"/>
<dbReference type="KEGG" id="geo:Geob_3335"/>
<dbReference type="eggNOG" id="COG0496">
    <property type="taxonomic scope" value="Bacteria"/>
</dbReference>
<dbReference type="HOGENOM" id="CLU_045192_1_2_7"/>
<dbReference type="OrthoDB" id="9780815at2"/>
<dbReference type="Proteomes" id="UP000007721">
    <property type="component" value="Chromosome"/>
</dbReference>
<dbReference type="GO" id="GO:0005737">
    <property type="term" value="C:cytoplasm"/>
    <property type="evidence" value="ECO:0007669"/>
    <property type="project" value="UniProtKB-SubCell"/>
</dbReference>
<dbReference type="GO" id="GO:0008254">
    <property type="term" value="F:3'-nucleotidase activity"/>
    <property type="evidence" value="ECO:0007669"/>
    <property type="project" value="TreeGrafter"/>
</dbReference>
<dbReference type="GO" id="GO:0008253">
    <property type="term" value="F:5'-nucleotidase activity"/>
    <property type="evidence" value="ECO:0007669"/>
    <property type="project" value="UniProtKB-UniRule"/>
</dbReference>
<dbReference type="GO" id="GO:0004309">
    <property type="term" value="F:exopolyphosphatase activity"/>
    <property type="evidence" value="ECO:0007669"/>
    <property type="project" value="TreeGrafter"/>
</dbReference>
<dbReference type="GO" id="GO:0046872">
    <property type="term" value="F:metal ion binding"/>
    <property type="evidence" value="ECO:0007669"/>
    <property type="project" value="UniProtKB-UniRule"/>
</dbReference>
<dbReference type="GO" id="GO:0000166">
    <property type="term" value="F:nucleotide binding"/>
    <property type="evidence" value="ECO:0007669"/>
    <property type="project" value="UniProtKB-KW"/>
</dbReference>
<dbReference type="FunFam" id="3.40.1210.10:FF:000001">
    <property type="entry name" value="5'/3'-nucleotidase SurE"/>
    <property type="match status" value="1"/>
</dbReference>
<dbReference type="Gene3D" id="3.40.1210.10">
    <property type="entry name" value="Survival protein SurE-like phosphatase/nucleotidase"/>
    <property type="match status" value="1"/>
</dbReference>
<dbReference type="HAMAP" id="MF_00060">
    <property type="entry name" value="SurE"/>
    <property type="match status" value="1"/>
</dbReference>
<dbReference type="InterPro" id="IPR030048">
    <property type="entry name" value="SurE"/>
</dbReference>
<dbReference type="InterPro" id="IPR002828">
    <property type="entry name" value="SurE-like_Pase/nucleotidase"/>
</dbReference>
<dbReference type="InterPro" id="IPR036523">
    <property type="entry name" value="SurE-like_sf"/>
</dbReference>
<dbReference type="NCBIfam" id="NF001489">
    <property type="entry name" value="PRK00346.1-3"/>
    <property type="match status" value="1"/>
</dbReference>
<dbReference type="NCBIfam" id="NF001490">
    <property type="entry name" value="PRK00346.1-4"/>
    <property type="match status" value="1"/>
</dbReference>
<dbReference type="NCBIfam" id="NF001492">
    <property type="entry name" value="PRK00346.2-2"/>
    <property type="match status" value="1"/>
</dbReference>
<dbReference type="NCBIfam" id="TIGR00087">
    <property type="entry name" value="surE"/>
    <property type="match status" value="1"/>
</dbReference>
<dbReference type="PANTHER" id="PTHR30457">
    <property type="entry name" value="5'-NUCLEOTIDASE SURE"/>
    <property type="match status" value="1"/>
</dbReference>
<dbReference type="PANTHER" id="PTHR30457:SF12">
    <property type="entry name" value="5'_3'-NUCLEOTIDASE SURE"/>
    <property type="match status" value="1"/>
</dbReference>
<dbReference type="Pfam" id="PF01975">
    <property type="entry name" value="SurE"/>
    <property type="match status" value="1"/>
</dbReference>
<dbReference type="SUPFAM" id="SSF64167">
    <property type="entry name" value="SurE-like"/>
    <property type="match status" value="1"/>
</dbReference>
<keyword id="KW-0963">Cytoplasm</keyword>
<keyword id="KW-0378">Hydrolase</keyword>
<keyword id="KW-0479">Metal-binding</keyword>
<keyword id="KW-0547">Nucleotide-binding</keyword>
<keyword id="KW-1185">Reference proteome</keyword>
<feature type="chain" id="PRO_1000196605" description="5'-nucleotidase SurE">
    <location>
        <begin position="1"/>
        <end position="248"/>
    </location>
</feature>
<feature type="binding site" evidence="1">
    <location>
        <position position="8"/>
    </location>
    <ligand>
        <name>a divalent metal cation</name>
        <dbReference type="ChEBI" id="CHEBI:60240"/>
    </ligand>
</feature>
<feature type="binding site" evidence="1">
    <location>
        <position position="9"/>
    </location>
    <ligand>
        <name>a divalent metal cation</name>
        <dbReference type="ChEBI" id="CHEBI:60240"/>
    </ligand>
</feature>
<feature type="binding site" evidence="1">
    <location>
        <position position="39"/>
    </location>
    <ligand>
        <name>a divalent metal cation</name>
        <dbReference type="ChEBI" id="CHEBI:60240"/>
    </ligand>
</feature>
<feature type="binding site" evidence="1">
    <location>
        <position position="91"/>
    </location>
    <ligand>
        <name>a divalent metal cation</name>
        <dbReference type="ChEBI" id="CHEBI:60240"/>
    </ligand>
</feature>
<reference key="1">
    <citation type="submission" date="2009-01" db="EMBL/GenBank/DDBJ databases">
        <title>Complete sequence of Geobacter sp. FRC-32.</title>
        <authorList>
            <consortium name="US DOE Joint Genome Institute"/>
            <person name="Lucas S."/>
            <person name="Copeland A."/>
            <person name="Lapidus A."/>
            <person name="Glavina del Rio T."/>
            <person name="Dalin E."/>
            <person name="Tice H."/>
            <person name="Bruce D."/>
            <person name="Goodwin L."/>
            <person name="Pitluck S."/>
            <person name="Saunders E."/>
            <person name="Brettin T."/>
            <person name="Detter J.C."/>
            <person name="Han C."/>
            <person name="Larimer F."/>
            <person name="Land M."/>
            <person name="Hauser L."/>
            <person name="Kyrpides N."/>
            <person name="Ovchinnikova G."/>
            <person name="Kostka J."/>
            <person name="Richardson P."/>
        </authorList>
    </citation>
    <scope>NUCLEOTIDE SEQUENCE [LARGE SCALE GENOMIC DNA]</scope>
    <source>
        <strain>DSM 22248 / JCM 15807 / FRC-32</strain>
    </source>
</reference>
<accession>B9M4Z4</accession>
<name>SURE_GEODF</name>
<gene>
    <name evidence="1" type="primary">surE</name>
    <name type="ordered locus">Geob_3335</name>
</gene>
<evidence type="ECO:0000255" key="1">
    <source>
        <dbReference type="HAMAP-Rule" id="MF_00060"/>
    </source>
</evidence>
<sequence>MKILLTNDDGVRAPGLNALAEAMTVLGQVFVIAPDREQSAVGHALTLHHPLRANKIGENIFAVDGTPTDCVNLGIHSLLSFKPDIVVSGINRGANLGDDVTYSGTVSAAMEATLMGIPAIAVSLVTSAEGTNYAAAAQFAVKLAATVREKGLPADTFLNVNVPDLPRERIRPPLVTTQGKRSYEGTIVDKVDPRGRNYYWIGTVDLNFKDIDGSDYHAVSRGHVSVTPLHLDLTNYNSIAVLKKWEIF</sequence>
<comment type="function">
    <text evidence="1">Nucleotidase that shows phosphatase activity on nucleoside 5'-monophosphates.</text>
</comment>
<comment type="catalytic activity">
    <reaction evidence="1">
        <text>a ribonucleoside 5'-phosphate + H2O = a ribonucleoside + phosphate</text>
        <dbReference type="Rhea" id="RHEA:12484"/>
        <dbReference type="ChEBI" id="CHEBI:15377"/>
        <dbReference type="ChEBI" id="CHEBI:18254"/>
        <dbReference type="ChEBI" id="CHEBI:43474"/>
        <dbReference type="ChEBI" id="CHEBI:58043"/>
        <dbReference type="EC" id="3.1.3.5"/>
    </reaction>
</comment>
<comment type="cofactor">
    <cofactor evidence="1">
        <name>a divalent metal cation</name>
        <dbReference type="ChEBI" id="CHEBI:60240"/>
    </cofactor>
    <text evidence="1">Binds 1 divalent metal cation per subunit.</text>
</comment>
<comment type="subcellular location">
    <subcellularLocation>
        <location evidence="1">Cytoplasm</location>
    </subcellularLocation>
</comment>
<comment type="similarity">
    <text evidence="1">Belongs to the SurE nucleotidase family.</text>
</comment>